<keyword id="KW-1064">Adaptive immunity</keyword>
<keyword id="KW-0238">DNA-binding</keyword>
<keyword id="KW-0391">Immunity</keyword>
<keyword id="KW-0399">Innate immunity</keyword>
<keyword id="KW-0479">Metal-binding</keyword>
<keyword id="KW-0539">Nucleus</keyword>
<keyword id="KW-1185">Reference proteome</keyword>
<keyword id="KW-0677">Repeat</keyword>
<keyword id="KW-0804">Transcription</keyword>
<keyword id="KW-0805">Transcription regulation</keyword>
<keyword id="KW-0862">Zinc</keyword>
<keyword id="KW-0863">Zinc-finger</keyword>
<sequence length="458" mass="50419">MKALDGLRESLYPSLDFQLYQDDQVCSADASQPLADSVGAHDLAWSERMCPLPLAPAKSPLLACPESPDLCLCALQKTPLGRAPQDLGEDASNMRHQPPSLYKASTDSEKLTIKDSLNREEMGNEPERGAYPHLPPRTSSFPDAGLDRKSLSPLTFWPWLPPTLISKEPPIHIYPIFPGYPLLPLPYLFTYGALPSAQHPYLFMLPPHSTYPTVAGPSLLMTASGSGPRIPQEKTLLLHSGAFQSAGHTLHSQVESRSSRDTRTPGQAGVAAPTRRAVPGSRAGVIALPYPLKKENGKILYECNVCGKNFGQLSNLKVHLRVHSGERPFQCALCQKRFTQLAHLQKHHLVHTGERPHQCQVCHKRFSSSSNLKTHLRLHSGAKPSQCGLCPSYLTPNVYPKLHHRLRAPQLRGLTHTHLPLASLTCLAQWHQGALDLVEKKMGWTVDKVSSESKGKQG</sequence>
<dbReference type="EMBL" id="AL670680">
    <property type="status" value="NOT_ANNOTATED_CDS"/>
    <property type="molecule type" value="Genomic_DNA"/>
</dbReference>
<dbReference type="SMR" id="I7HJS4"/>
<dbReference type="FunCoup" id="I7HJS4">
    <property type="interactions" value="30"/>
</dbReference>
<dbReference type="STRING" id="10090.ENSMUSP00000101508"/>
<dbReference type="iPTMnet" id="I7HJS4"/>
<dbReference type="PhosphoSitePlus" id="I7HJS4"/>
<dbReference type="PaxDb" id="10090-ENSMUSP00000101508"/>
<dbReference type="PeptideAtlas" id="I7HJS4"/>
<dbReference type="Ensembl" id="ENSMUST00000105884.2">
    <property type="protein sequence ID" value="ENSMUSP00000101508.2"/>
    <property type="gene ID" value="ENSMUSG00000049410.9"/>
</dbReference>
<dbReference type="AGR" id="MGI:3650254"/>
<dbReference type="MGI" id="MGI:3650254">
    <property type="gene designation" value="Zfp683"/>
</dbReference>
<dbReference type="VEuPathDB" id="HostDB:ENSMUSG00000049410"/>
<dbReference type="eggNOG" id="KOG2461">
    <property type="taxonomic scope" value="Eukaryota"/>
</dbReference>
<dbReference type="GeneTree" id="ENSGT00940000164781"/>
<dbReference type="HOGENOM" id="CLU_040814_0_0_1"/>
<dbReference type="InParanoid" id="I7HJS4"/>
<dbReference type="OMA" id="KCQMCHK"/>
<dbReference type="OrthoDB" id="9345291at2759"/>
<dbReference type="PhylomeDB" id="I7HJS4"/>
<dbReference type="TreeFam" id="TF316545"/>
<dbReference type="PRO" id="PR:I7HJS4"/>
<dbReference type="Proteomes" id="UP000000589">
    <property type="component" value="Chromosome 4"/>
</dbReference>
<dbReference type="RNAct" id="I7HJS4">
    <property type="molecule type" value="protein"/>
</dbReference>
<dbReference type="Bgee" id="ENSMUSG00000049410">
    <property type="expression patterns" value="Expressed in thymus and 5 other cell types or tissues"/>
</dbReference>
<dbReference type="GO" id="GO:0005634">
    <property type="term" value="C:nucleus"/>
    <property type="evidence" value="ECO:0007669"/>
    <property type="project" value="UniProtKB-SubCell"/>
</dbReference>
<dbReference type="GO" id="GO:0003677">
    <property type="term" value="F:DNA binding"/>
    <property type="evidence" value="ECO:0007669"/>
    <property type="project" value="UniProtKB-KW"/>
</dbReference>
<dbReference type="GO" id="GO:1990841">
    <property type="term" value="F:promoter-specific chromatin binding"/>
    <property type="evidence" value="ECO:0000314"/>
    <property type="project" value="UniProtKB"/>
</dbReference>
<dbReference type="GO" id="GO:0008270">
    <property type="term" value="F:zinc ion binding"/>
    <property type="evidence" value="ECO:0007669"/>
    <property type="project" value="UniProtKB-KW"/>
</dbReference>
<dbReference type="GO" id="GO:0002250">
    <property type="term" value="P:adaptive immune response"/>
    <property type="evidence" value="ECO:0007669"/>
    <property type="project" value="UniProtKB-KW"/>
</dbReference>
<dbReference type="GO" id="GO:0045087">
    <property type="term" value="P:innate immune response"/>
    <property type="evidence" value="ECO:0007669"/>
    <property type="project" value="UniProtKB-KW"/>
</dbReference>
<dbReference type="GO" id="GO:0001779">
    <property type="term" value="P:natural killer cell differentiation"/>
    <property type="evidence" value="ECO:0000315"/>
    <property type="project" value="MGI"/>
</dbReference>
<dbReference type="GO" id="GO:0001865">
    <property type="term" value="P:NK T cell differentiation"/>
    <property type="evidence" value="ECO:0000315"/>
    <property type="project" value="MGI"/>
</dbReference>
<dbReference type="GO" id="GO:0033082">
    <property type="term" value="P:regulation of extrathymic T cell differentiation"/>
    <property type="evidence" value="ECO:0000315"/>
    <property type="project" value="UniProtKB"/>
</dbReference>
<dbReference type="GO" id="GO:0010468">
    <property type="term" value="P:regulation of gene expression"/>
    <property type="evidence" value="ECO:0000315"/>
    <property type="project" value="UniProtKB"/>
</dbReference>
<dbReference type="GO" id="GO:0032823">
    <property type="term" value="P:regulation of natural killer cell differentiation"/>
    <property type="evidence" value="ECO:0000315"/>
    <property type="project" value="UniProtKB"/>
</dbReference>
<dbReference type="GO" id="GO:0032826">
    <property type="term" value="P:regulation of natural killer cell differentiation involved in immune response"/>
    <property type="evidence" value="ECO:0000315"/>
    <property type="project" value="UniProtKB"/>
</dbReference>
<dbReference type="GO" id="GO:0051136">
    <property type="term" value="P:regulation of NK T cell differentiation"/>
    <property type="evidence" value="ECO:0000315"/>
    <property type="project" value="UniProtKB"/>
</dbReference>
<dbReference type="FunFam" id="3.30.160.60:FF:000132">
    <property type="entry name" value="PR domain zinc finger protein 1"/>
    <property type="match status" value="1"/>
</dbReference>
<dbReference type="FunFam" id="3.30.160.60:FF:000262">
    <property type="entry name" value="PR domain zinc finger protein 1"/>
    <property type="match status" value="1"/>
</dbReference>
<dbReference type="FunFam" id="3.30.160.60:FF:001272">
    <property type="entry name" value="Zinc finger protein 683"/>
    <property type="match status" value="1"/>
</dbReference>
<dbReference type="Gene3D" id="3.30.160.60">
    <property type="entry name" value="Classic Zinc Finger"/>
    <property type="match status" value="3"/>
</dbReference>
<dbReference type="InterPro" id="IPR050331">
    <property type="entry name" value="Zinc_finger"/>
</dbReference>
<dbReference type="InterPro" id="IPR036236">
    <property type="entry name" value="Znf_C2H2_sf"/>
</dbReference>
<dbReference type="InterPro" id="IPR013087">
    <property type="entry name" value="Znf_C2H2_type"/>
</dbReference>
<dbReference type="PANTHER" id="PTHR16515">
    <property type="entry name" value="PR DOMAIN ZINC FINGER PROTEIN"/>
    <property type="match status" value="1"/>
</dbReference>
<dbReference type="PANTHER" id="PTHR16515:SF53">
    <property type="entry name" value="ZINC FINGER PROTEIN 683"/>
    <property type="match status" value="1"/>
</dbReference>
<dbReference type="Pfam" id="PF00096">
    <property type="entry name" value="zf-C2H2"/>
    <property type="match status" value="3"/>
</dbReference>
<dbReference type="SMART" id="SM00355">
    <property type="entry name" value="ZnF_C2H2"/>
    <property type="match status" value="3"/>
</dbReference>
<dbReference type="SUPFAM" id="SSF57667">
    <property type="entry name" value="beta-beta-alpha zinc fingers"/>
    <property type="match status" value="2"/>
</dbReference>
<dbReference type="PROSITE" id="PS00028">
    <property type="entry name" value="ZINC_FINGER_C2H2_1"/>
    <property type="match status" value="3"/>
</dbReference>
<dbReference type="PROSITE" id="PS50157">
    <property type="entry name" value="ZINC_FINGER_C2H2_2"/>
    <property type="match status" value="3"/>
</dbReference>
<protein>
    <recommendedName>
        <fullName evidence="6">Tissue-resident T-cell transcription regulator protein ZNF683</fullName>
    </recommendedName>
    <alternativeName>
        <fullName evidence="5">Homolog of Blimp-1 in T-cell</fullName>
        <shortName evidence="5">Hobit</shortName>
    </alternativeName>
    <alternativeName>
        <fullName evidence="7">Zinc finger protein 683</fullName>
    </alternativeName>
</protein>
<organism>
    <name type="scientific">Mus musculus</name>
    <name type="common">Mouse</name>
    <dbReference type="NCBI Taxonomy" id="10090"/>
    <lineage>
        <taxon>Eukaryota</taxon>
        <taxon>Metazoa</taxon>
        <taxon>Chordata</taxon>
        <taxon>Craniata</taxon>
        <taxon>Vertebrata</taxon>
        <taxon>Euteleostomi</taxon>
        <taxon>Mammalia</taxon>
        <taxon>Eutheria</taxon>
        <taxon>Euarchontoglires</taxon>
        <taxon>Glires</taxon>
        <taxon>Rodentia</taxon>
        <taxon>Myomorpha</taxon>
        <taxon>Muroidea</taxon>
        <taxon>Muridae</taxon>
        <taxon>Murinae</taxon>
        <taxon>Mus</taxon>
        <taxon>Mus</taxon>
    </lineage>
</organism>
<reference key="1">
    <citation type="journal article" date="2009" name="PLoS Biol.">
        <title>Lineage-specific biology revealed by a finished genome assembly of the mouse.</title>
        <authorList>
            <person name="Church D.M."/>
            <person name="Goodstadt L."/>
            <person name="Hillier L.W."/>
            <person name="Zody M.C."/>
            <person name="Goldstein S."/>
            <person name="She X."/>
            <person name="Bult C.J."/>
            <person name="Agarwala R."/>
            <person name="Cherry J.L."/>
            <person name="DiCuccio M."/>
            <person name="Hlavina W."/>
            <person name="Kapustin Y."/>
            <person name="Meric P."/>
            <person name="Maglott D."/>
            <person name="Birtle Z."/>
            <person name="Marques A.C."/>
            <person name="Graves T."/>
            <person name="Zhou S."/>
            <person name="Teague B."/>
            <person name="Potamousis K."/>
            <person name="Churas C."/>
            <person name="Place M."/>
            <person name="Herschleb J."/>
            <person name="Runnheim R."/>
            <person name="Forrest D."/>
            <person name="Amos-Landgraf J."/>
            <person name="Schwartz D.C."/>
            <person name="Cheng Z."/>
            <person name="Lindblad-Toh K."/>
            <person name="Eichler E.E."/>
            <person name="Ponting C.P."/>
        </authorList>
    </citation>
    <scope>NUCLEOTIDE SEQUENCE [LARGE SCALE GENOMIC DNA]</scope>
    <source>
        <strain evidence="8">C57BL/6J</strain>
    </source>
</reference>
<reference key="2">
    <citation type="journal article" date="2012" name="Nat. Immunol.">
        <title>Mouse Hobit is a homolog of the transcriptional repressor Blimp-1 that regulates NKT cell effector differentiation.</title>
        <authorList>
            <person name="van Gisbergen K.P."/>
            <person name="Kragten N.A."/>
            <person name="Hertoghs K.M."/>
            <person name="Wensveen F.M."/>
            <person name="Jonjic S."/>
            <person name="Hamann J."/>
            <person name="Nolte M.A."/>
            <person name="van Lier R.A."/>
        </authorList>
    </citation>
    <scope>FUNCTION</scope>
    <scope>DISRUPTION PHENOTYPE</scope>
    <scope>TISSUE SPECIFICITY</scope>
    <scope>INDUCTION</scope>
</reference>
<reference key="3">
    <citation type="journal article" date="2016" name="Science">
        <title>Hobit and Blimp1 instruct a universal transcriptional program of tissue residency in lymphocytes.</title>
        <authorList>
            <person name="Mackay L.K."/>
            <person name="Minnich M."/>
            <person name="Kragten N.A."/>
            <person name="Liao Y."/>
            <person name="Nota B."/>
            <person name="Seillet C."/>
            <person name="Zaid A."/>
            <person name="Man K."/>
            <person name="Preston S."/>
            <person name="Freestone D."/>
            <person name="Braun A."/>
            <person name="Wynne-Jones E."/>
            <person name="Behr F.M."/>
            <person name="Stark R."/>
            <person name="Pellicci D.G."/>
            <person name="Godfrey D.I."/>
            <person name="Belz G.T."/>
            <person name="Pellegrini M."/>
            <person name="Gebhardt T."/>
            <person name="Busslinger M."/>
            <person name="Shi W."/>
            <person name="Carbone F.R."/>
            <person name="van Lier R.A."/>
            <person name="Kallies A."/>
            <person name="van Gisbergen K.P."/>
        </authorList>
    </citation>
    <scope>FUNCTION</scope>
    <scope>DISRUPTION PHENOTYPE</scope>
    <scope>TISSUE SPECIFICITY</scope>
    <scope>INDUCTION (MICROBIAL INFECTION)</scope>
</reference>
<comment type="function">
    <text evidence="3 4">Transcription factor that mediates a transcriptional program in various innate and adaptive immune tissue-resident lymphocyte T-cell types such as tissue-resident memory T (Trm), natural killer (trNK) and natural killer T (NKT) cells and negatively regulates gene expression of proteins that promote the egress of tissue-resident T-cell populations from non-lymphoid organs (PubMed:22885984, PubMed:27102484). Plays a role in the development, retention and long-term establishment of adaptive and innate tissue-resident lymphocyte T-cell types in non-lymphoid organs, such as the skin and gut, but also in other nonbarrier tissues like liver and kidney, and therefore may provide immediate immunological protection against reactivating infections or viral reinfection (PubMed:22885984, PubMed:27102484). Also plays a role in the differentiation of both thymic and peripheral NKT cells (PubMed:22885984). Negatively regulates the accumulation of interferon-gamma (IFN-gamma) in NKT cells at steady state or after antigenic stimulation (PubMed:22885984). Positively regulates granzyme B production in NKT cells after innate stimulation (PubMed:22885984). Associates with the transcriptional repressor PRDM1/BLIMP1 to chromatin at gene promoter regions (PubMed:27102484).</text>
</comment>
<comment type="subcellular location">
    <subcellularLocation>
        <location evidence="6">Nucleus</location>
    </subcellularLocation>
</comment>
<comment type="tissue specificity">
    <text evidence="3 4">Expressed in tissue-resident memory T (Trm) cell population in non-lymphoid organs, such as skin and gut (PubMed:27102484). Expressed in innate lymphocytes, including tissue-resident natural killer (trNK) and natural killer T (NKT) cells in thymus, spleen and liver (PubMed:22885984, PubMed:27102484).</text>
</comment>
<comment type="induction">
    <text evidence="3 4">Up-regulated by interleukin IL15 in a TBX21/T-bet-dependent manner in tissue-resident memory T (Trm) cell population (PubMed:27102484). Up-regulated during the differentiation of natural killer T (NKT) cells (PubMed:22885984). Down-regulated in NKT cells after antigenic stimulation (PubMed:22885984).</text>
</comment>
<comment type="induction">
    <text evidence="4">(Microbial infection) Up-regulated in response to Herpes simplex virus (HSV) infection in skin CD8(+) tissue-resident memory T (Trm) cells, but not in spleen.</text>
</comment>
<comment type="induction">
    <text evidence="4">(Microbial infection) Up-regulated in response to choriomeningitis virus (LCMV) infection in gut CD8(+) tissue-resident memory T (Trm) cells.</text>
</comment>
<comment type="disruption phenotype">
    <text evidence="4">Mice show a reduction in tissue-resident memory T (Trm) cell population maintenance in the skin, gut, liver and kidney but not of splenic T-cells (PubMed:22885984, PubMed:27102484). Double knockouts for Znf683 and Prdm1/Blimp1 result in a stronger inhibition of Trm cell population maintenance (PubMed:27102484). Display an enhancement of natural killer T (NKT) cells migration preferentially to the white pulp of the spleen in response to chemotactic stimuli (PubMed:27102484). Also results in the derepressed expression of a large number of genes implicated in the egress of tissue-resident T-cells from non-lymphoide organs (PubMed:27102484).</text>
</comment>
<comment type="similarity">
    <text evidence="6">Belongs to the krueppel C2H2-type zinc-finger protein family.</text>
</comment>
<proteinExistence type="evidence at transcript level"/>
<feature type="chain" id="PRO_0000437412" description="Tissue-resident T-cell transcription regulator protein ZNF683">
    <location>
        <begin position="1"/>
        <end position="458"/>
    </location>
</feature>
<feature type="zinc finger region" description="C2H2-type 1" evidence="1">
    <location>
        <begin position="301"/>
        <end position="323"/>
    </location>
</feature>
<feature type="zinc finger region" description="C2H2-type 2" evidence="1">
    <location>
        <begin position="329"/>
        <end position="351"/>
    </location>
</feature>
<feature type="zinc finger region" description="C2H2-type 3" evidence="1">
    <location>
        <begin position="357"/>
        <end position="379"/>
    </location>
</feature>
<feature type="region of interest" description="Disordered" evidence="2">
    <location>
        <begin position="84"/>
        <end position="109"/>
    </location>
</feature>
<feature type="region of interest" description="Disordered" evidence="2">
    <location>
        <begin position="249"/>
        <end position="275"/>
    </location>
</feature>
<gene>
    <name evidence="7" type="primary">Znf683</name>
    <name type="synonym">Gm13060</name>
    <name type="synonym">Zfp683</name>
</gene>
<name>ZN683_MOUSE</name>
<accession>I7HJS4</accession>
<evidence type="ECO:0000255" key="1">
    <source>
        <dbReference type="PROSITE-ProRule" id="PRU00042"/>
    </source>
</evidence>
<evidence type="ECO:0000256" key="2">
    <source>
        <dbReference type="SAM" id="MobiDB-lite"/>
    </source>
</evidence>
<evidence type="ECO:0000269" key="3">
    <source>
    </source>
</evidence>
<evidence type="ECO:0000269" key="4">
    <source>
    </source>
</evidence>
<evidence type="ECO:0000303" key="5">
    <source>
    </source>
</evidence>
<evidence type="ECO:0000305" key="6"/>
<evidence type="ECO:0000312" key="7">
    <source>
        <dbReference type="MGI" id="MGI:3650254"/>
    </source>
</evidence>
<evidence type="ECO:0000312" key="8">
    <source>
        <dbReference type="Proteomes" id="UP000000589"/>
    </source>
</evidence>